<comment type="function">
    <text evidence="1">Converts heme B (protoheme IX) to heme O by substitution of the vinyl group on carbon 2 of heme B porphyrin ring with a hydroxyethyl farnesyl side group.</text>
</comment>
<comment type="catalytic activity">
    <reaction evidence="1">
        <text>heme b + (2E,6E)-farnesyl diphosphate + H2O = Fe(II)-heme o + diphosphate</text>
        <dbReference type="Rhea" id="RHEA:28070"/>
        <dbReference type="ChEBI" id="CHEBI:15377"/>
        <dbReference type="ChEBI" id="CHEBI:33019"/>
        <dbReference type="ChEBI" id="CHEBI:60344"/>
        <dbReference type="ChEBI" id="CHEBI:60530"/>
        <dbReference type="ChEBI" id="CHEBI:175763"/>
        <dbReference type="EC" id="2.5.1.141"/>
    </reaction>
</comment>
<comment type="pathway">
    <text evidence="1">Porphyrin-containing compound metabolism; heme O biosynthesis; heme O from protoheme: step 1/1.</text>
</comment>
<comment type="subcellular location">
    <subcellularLocation>
        <location evidence="1">Cell inner membrane</location>
        <topology evidence="1">Multi-pass membrane protein</topology>
    </subcellularLocation>
</comment>
<comment type="miscellaneous">
    <text evidence="1">Carbon 2 of the heme B porphyrin ring is defined according to the Fischer nomenclature.</text>
</comment>
<comment type="similarity">
    <text evidence="1">Belongs to the UbiA prenyltransferase family. Protoheme IX farnesyltransferase subfamily.</text>
</comment>
<feature type="chain" id="PRO_0000327177" description="Protoheme IX farnesyltransferase">
    <location>
        <begin position="1"/>
        <end position="331"/>
    </location>
</feature>
<feature type="transmembrane region" description="Helical" evidence="1">
    <location>
        <begin position="22"/>
        <end position="42"/>
    </location>
</feature>
<feature type="transmembrane region" description="Helical" evidence="1">
    <location>
        <begin position="50"/>
        <end position="70"/>
    </location>
</feature>
<feature type="transmembrane region" description="Helical" evidence="1">
    <location>
        <begin position="100"/>
        <end position="120"/>
    </location>
</feature>
<feature type="transmembrane region" description="Helical" evidence="1">
    <location>
        <begin position="147"/>
        <end position="167"/>
    </location>
</feature>
<feature type="transmembrane region" description="Helical" evidence="1">
    <location>
        <begin position="174"/>
        <end position="194"/>
    </location>
</feature>
<feature type="transmembrane region" description="Helical" evidence="1">
    <location>
        <begin position="220"/>
        <end position="240"/>
    </location>
</feature>
<feature type="transmembrane region" description="Helical" evidence="1">
    <location>
        <begin position="241"/>
        <end position="261"/>
    </location>
</feature>
<feature type="transmembrane region" description="Helical" evidence="1">
    <location>
        <begin position="273"/>
        <end position="293"/>
    </location>
</feature>
<feature type="transmembrane region" description="Helical" evidence="1">
    <location>
        <begin position="307"/>
        <end position="327"/>
    </location>
</feature>
<proteinExistence type="inferred from homology"/>
<name>COXX_SYNJA</name>
<evidence type="ECO:0000255" key="1">
    <source>
        <dbReference type="HAMAP-Rule" id="MF_00154"/>
    </source>
</evidence>
<accession>Q2JQK9</accession>
<protein>
    <recommendedName>
        <fullName evidence="1">Protoheme IX farnesyltransferase</fullName>
        <ecNumber evidence="1">2.5.1.141</ecNumber>
    </recommendedName>
    <alternativeName>
        <fullName evidence="1">Heme B farnesyltransferase</fullName>
    </alternativeName>
    <alternativeName>
        <fullName evidence="1">Heme O synthase</fullName>
    </alternativeName>
</protein>
<reference key="1">
    <citation type="journal article" date="2007" name="ISME J.">
        <title>Population level functional diversity in a microbial community revealed by comparative genomic and metagenomic analyses.</title>
        <authorList>
            <person name="Bhaya D."/>
            <person name="Grossman A.R."/>
            <person name="Steunou A.-S."/>
            <person name="Khuri N."/>
            <person name="Cohan F.M."/>
            <person name="Hamamura N."/>
            <person name="Melendrez M.C."/>
            <person name="Bateson M.M."/>
            <person name="Ward D.M."/>
            <person name="Heidelberg J.F."/>
        </authorList>
    </citation>
    <scope>NUCLEOTIDE SEQUENCE [LARGE SCALE GENOMIC DNA]</scope>
    <source>
        <strain>JA-3-3Ab</strain>
    </source>
</reference>
<sequence length="331" mass="35685">MTGIPFGHHQSLAQVLRSYSQLVKPKIIALLLMTTAGAMWMAGNTDPFKFGVTLLGGGMAAAAANVINMVYDADIDRMMERTRHRPLPSGRIRARHALRFAGILAVMSFGLLACFTNLLAASLAMAGILVYVGVYTHWLKRSSPQNIVIGGAAGAIPPLVGWAAATGELSWAAWVMFALIFLWTPPHFWALAILKREDYARAGVPMLPVVAGERPTAAQILLYALLLVPVSLLLVYPLHVLGSFYLSAATLLGSLLIWKAVQLLQEPHSRERATSLFTFANLYLLLLCGAMGLDRWSLTHTLWDQALASLQGVYASLGALANHLGAMGSLG</sequence>
<gene>
    <name evidence="1" type="primary">ctaB</name>
    <name type="ordered locus">CYA_1517</name>
</gene>
<organism>
    <name type="scientific">Synechococcus sp. (strain JA-3-3Ab)</name>
    <name type="common">Cyanobacteria bacterium Yellowstone A-Prime</name>
    <dbReference type="NCBI Taxonomy" id="321327"/>
    <lineage>
        <taxon>Bacteria</taxon>
        <taxon>Bacillati</taxon>
        <taxon>Cyanobacteriota</taxon>
        <taxon>Cyanophyceae</taxon>
        <taxon>Synechococcales</taxon>
        <taxon>Synechococcaceae</taxon>
        <taxon>Synechococcus</taxon>
    </lineage>
</organism>
<keyword id="KW-0997">Cell inner membrane</keyword>
<keyword id="KW-1003">Cell membrane</keyword>
<keyword id="KW-0350">Heme biosynthesis</keyword>
<keyword id="KW-0472">Membrane</keyword>
<keyword id="KW-0808">Transferase</keyword>
<keyword id="KW-0812">Transmembrane</keyword>
<keyword id="KW-1133">Transmembrane helix</keyword>
<dbReference type="EC" id="2.5.1.141" evidence="1"/>
<dbReference type="EMBL" id="CP000239">
    <property type="protein sequence ID" value="ABC99682.1"/>
    <property type="molecule type" value="Genomic_DNA"/>
</dbReference>
<dbReference type="RefSeq" id="WP_011430360.1">
    <property type="nucleotide sequence ID" value="NC_007775.1"/>
</dbReference>
<dbReference type="SMR" id="Q2JQK9"/>
<dbReference type="STRING" id="321327.CYA_1517"/>
<dbReference type="KEGG" id="cya:CYA_1517"/>
<dbReference type="eggNOG" id="COG0109">
    <property type="taxonomic scope" value="Bacteria"/>
</dbReference>
<dbReference type="HOGENOM" id="CLU_029631_0_2_3"/>
<dbReference type="OrthoDB" id="9814417at2"/>
<dbReference type="UniPathway" id="UPA00834">
    <property type="reaction ID" value="UER00712"/>
</dbReference>
<dbReference type="Proteomes" id="UP000008818">
    <property type="component" value="Chromosome"/>
</dbReference>
<dbReference type="GO" id="GO:0005886">
    <property type="term" value="C:plasma membrane"/>
    <property type="evidence" value="ECO:0007669"/>
    <property type="project" value="UniProtKB-SubCell"/>
</dbReference>
<dbReference type="GO" id="GO:0008495">
    <property type="term" value="F:protoheme IX farnesyltransferase activity"/>
    <property type="evidence" value="ECO:0007669"/>
    <property type="project" value="UniProtKB-UniRule"/>
</dbReference>
<dbReference type="GO" id="GO:0048034">
    <property type="term" value="P:heme O biosynthetic process"/>
    <property type="evidence" value="ECO:0007669"/>
    <property type="project" value="UniProtKB-UniRule"/>
</dbReference>
<dbReference type="CDD" id="cd13957">
    <property type="entry name" value="PT_UbiA_Cox10"/>
    <property type="match status" value="1"/>
</dbReference>
<dbReference type="FunFam" id="1.10.357.140:FF:000001">
    <property type="entry name" value="Protoheme IX farnesyltransferase"/>
    <property type="match status" value="1"/>
</dbReference>
<dbReference type="Gene3D" id="1.10.357.140">
    <property type="entry name" value="UbiA prenyltransferase"/>
    <property type="match status" value="1"/>
</dbReference>
<dbReference type="HAMAP" id="MF_00154">
    <property type="entry name" value="CyoE_CtaB"/>
    <property type="match status" value="1"/>
</dbReference>
<dbReference type="InterPro" id="IPR006369">
    <property type="entry name" value="Protohaem_IX_farnesylTrfase"/>
</dbReference>
<dbReference type="InterPro" id="IPR000537">
    <property type="entry name" value="UbiA_prenyltransferase"/>
</dbReference>
<dbReference type="InterPro" id="IPR030470">
    <property type="entry name" value="UbiA_prenylTrfase_CS"/>
</dbReference>
<dbReference type="InterPro" id="IPR044878">
    <property type="entry name" value="UbiA_sf"/>
</dbReference>
<dbReference type="NCBIfam" id="TIGR01473">
    <property type="entry name" value="cyoE_ctaB"/>
    <property type="match status" value="1"/>
</dbReference>
<dbReference type="NCBIfam" id="NF003349">
    <property type="entry name" value="PRK04375.1-2"/>
    <property type="match status" value="1"/>
</dbReference>
<dbReference type="PANTHER" id="PTHR43448:SF7">
    <property type="entry name" value="4-HYDROXYBENZOATE SOLANESYLTRANSFERASE"/>
    <property type="match status" value="1"/>
</dbReference>
<dbReference type="PANTHER" id="PTHR43448">
    <property type="entry name" value="PROTOHEME IX FARNESYLTRANSFERASE, MITOCHONDRIAL"/>
    <property type="match status" value="1"/>
</dbReference>
<dbReference type="Pfam" id="PF01040">
    <property type="entry name" value="UbiA"/>
    <property type="match status" value="1"/>
</dbReference>
<dbReference type="PROSITE" id="PS00943">
    <property type="entry name" value="UBIA"/>
    <property type="match status" value="1"/>
</dbReference>